<name>VAPB1_HAEI8</name>
<sequence length="78" mass="9037">MLTKVFQSGNSQAVRIPMDFRFDVDTVEIFRKENGDVVLRPVSKKTDDFLALFEGFDETFIQALEARDDLPPQERENL</sequence>
<proteinExistence type="evidence at protein level"/>
<feature type="chain" id="PRO_0000408043" description="Antitoxin VapB1">
    <location>
        <begin position="1"/>
        <end position="78"/>
    </location>
</feature>
<feature type="domain" description="SpoVT-AbrB" evidence="1">
    <location>
        <begin position="3"/>
        <end position="44"/>
    </location>
</feature>
<feature type="mutagenesis site" description="Now functions as an antitoxin against cognate toxin VapC1 and non-cognate toxin VapC2, forms a complex with both." evidence="4">
    <original>T</original>
    <variation>W</variation>
    <location>
        <position position="46"/>
    </location>
</feature>
<feature type="mutagenesis site" description="No effect on antitoxin function against VapC1." evidence="4">
    <original>F</original>
    <variation>V</variation>
    <location>
        <position position="49"/>
    </location>
</feature>
<feature type="mutagenesis site" description="No effect on antitoxin function against VapC1." evidence="4">
    <original>D</original>
    <variation>A</variation>
    <location>
        <position position="57"/>
    </location>
</feature>
<feature type="mutagenesis site" description="No effect on antitoxin function against VapC1." evidence="4">
    <original>E</original>
    <variation>A</variation>
    <location>
        <position position="58"/>
    </location>
</feature>
<feature type="mutagenesis site" description="No effect on antitoxin function against VapC1." evidence="4">
    <original>F</original>
    <variation>L</variation>
    <location>
        <position position="60"/>
    </location>
</feature>
<feature type="mutagenesis site" description="No effect on antitoxin function against VapC1." evidence="4">
    <original>R</original>
    <variation>G</variation>
    <location>
        <position position="67"/>
    </location>
</feature>
<organism>
    <name type="scientific">Haemophilus influenzae (strain 86-028NP)</name>
    <dbReference type="NCBI Taxonomy" id="281310"/>
    <lineage>
        <taxon>Bacteria</taxon>
        <taxon>Pseudomonadati</taxon>
        <taxon>Pseudomonadota</taxon>
        <taxon>Gammaproteobacteria</taxon>
        <taxon>Pasteurellales</taxon>
        <taxon>Pasteurellaceae</taxon>
        <taxon>Haemophilus</taxon>
    </lineage>
</organism>
<dbReference type="EMBL" id="CP000057">
    <property type="protein sequence ID" value="AAX87379.1"/>
    <property type="molecule type" value="Genomic_DNA"/>
</dbReference>
<dbReference type="RefSeq" id="WP_005649046.1">
    <property type="nucleotide sequence ID" value="NC_007146.2"/>
</dbReference>
<dbReference type="SMR" id="Q4QNL8"/>
<dbReference type="GeneID" id="93219270"/>
<dbReference type="KEGG" id="hit:NTHI0439"/>
<dbReference type="HOGENOM" id="CLU_162018_2_1_6"/>
<dbReference type="PHI-base" id="PHI:9868"/>
<dbReference type="Proteomes" id="UP000002525">
    <property type="component" value="Chromosome"/>
</dbReference>
<dbReference type="GO" id="GO:0003677">
    <property type="term" value="F:DNA binding"/>
    <property type="evidence" value="ECO:0007669"/>
    <property type="project" value="UniProtKB-KW"/>
</dbReference>
<dbReference type="Gene3D" id="2.10.260.10">
    <property type="match status" value="1"/>
</dbReference>
<dbReference type="InterPro" id="IPR007159">
    <property type="entry name" value="SpoVT-AbrB_dom"/>
</dbReference>
<dbReference type="InterPro" id="IPR037914">
    <property type="entry name" value="SpoVT-AbrB_sf"/>
</dbReference>
<dbReference type="InterPro" id="IPR051734">
    <property type="entry name" value="VapB_TA_antitoxins"/>
</dbReference>
<dbReference type="PANTHER" id="PTHR37550">
    <property type="entry name" value="ANTITOXIN VAPB1"/>
    <property type="match status" value="1"/>
</dbReference>
<dbReference type="PANTHER" id="PTHR37550:SF3">
    <property type="entry name" value="ANTITOXIN VAPB1"/>
    <property type="match status" value="1"/>
</dbReference>
<dbReference type="Pfam" id="PF04014">
    <property type="entry name" value="MazE_antitoxin"/>
    <property type="match status" value="1"/>
</dbReference>
<dbReference type="SMART" id="SM00966">
    <property type="entry name" value="SpoVT_AbrB"/>
    <property type="match status" value="1"/>
</dbReference>
<dbReference type="SUPFAM" id="SSF89447">
    <property type="entry name" value="AbrB/MazE/MraZ-like"/>
    <property type="match status" value="1"/>
</dbReference>
<dbReference type="PROSITE" id="PS51740">
    <property type="entry name" value="SPOVT_ABRB"/>
    <property type="match status" value="1"/>
</dbReference>
<keyword id="KW-0238">DNA-binding</keyword>
<keyword id="KW-1277">Toxin-antitoxin system</keyword>
<gene>
    <name type="primary">vapB1</name>
    <name type="ordered locus">NTHI0439</name>
</gene>
<reference key="1">
    <citation type="journal article" date="2005" name="J. Bacteriol.">
        <title>Genomic sequence of an otitis media isolate of nontypeable Haemophilus influenzae: comparative study with H. influenzae serotype d, strain KW20.</title>
        <authorList>
            <person name="Harrison A."/>
            <person name="Dyer D.W."/>
            <person name="Gillaspy A."/>
            <person name="Ray W.C."/>
            <person name="Mungur R."/>
            <person name="Carson M.B."/>
            <person name="Zhong H."/>
            <person name="Gipson J."/>
            <person name="Gipson M."/>
            <person name="Johnson L.S."/>
            <person name="Lewis L."/>
            <person name="Bakaletz L.O."/>
            <person name="Munson R.S. Jr."/>
        </authorList>
    </citation>
    <scope>NUCLEOTIDE SEQUENCE [LARGE SCALE GENOMIC DNA]</scope>
    <source>
        <strain>86-028NP</strain>
    </source>
</reference>
<reference key="2">
    <citation type="journal article" date="2007" name="J. Bacteriol.">
        <title>VapC-1 of nontypeable Haemophilus influenzae is a ribonuclease.</title>
        <authorList>
            <person name="Daines D.A."/>
            <person name="Wu M.H."/>
            <person name="Yuan S.Y."/>
        </authorList>
    </citation>
    <scope>INDUCTION</scope>
    <scope>OPERON STRUCTURE</scope>
    <source>
        <strain>86-028NP</strain>
    </source>
</reference>
<reference key="3">
    <citation type="journal article" date="2014" name="PLoS ONE">
        <title>Analysis of non-typeable Haemophilous influenzae VapC1 mutations reveals structural features required for toxicity and flexibility in the active site.</title>
        <authorList>
            <person name="Hamilton B."/>
            <person name="Manzella A."/>
            <person name="Schmidt K."/>
            <person name="DiMarco V."/>
            <person name="Butler J.S."/>
        </authorList>
    </citation>
    <scope>FUNCTION</scope>
</reference>
<reference key="4">
    <citation type="journal article" date="2016" name="J. Bacteriol.">
        <title>Structural determinants for antitoxin identity and insulation of cross talk between homologous toxin-antitoxin systems.</title>
        <authorList>
            <person name="Walling L.R."/>
            <person name="Butler J.S."/>
        </authorList>
    </citation>
    <scope>FUNCTION</scope>
    <scope>SUBUNIT</scope>
    <scope>MUTAGENESIS OF THR-46; PHE-49; ASP-57; GLU-58; PHE-60 AND ARG-67</scope>
    <source>
        <strain>86-028NP</strain>
    </source>
</reference>
<evidence type="ECO:0000255" key="1">
    <source>
        <dbReference type="PROSITE-ProRule" id="PRU01076"/>
    </source>
</evidence>
<evidence type="ECO:0000269" key="2">
    <source>
    </source>
</evidence>
<evidence type="ECO:0000269" key="3">
    <source>
    </source>
</evidence>
<evidence type="ECO:0000269" key="4">
    <source>
    </source>
</evidence>
<evidence type="ECO:0000303" key="5">
    <source>
    </source>
</evidence>
<evidence type="ECO:0000305" key="6"/>
<accession>Q4QNL8</accession>
<comment type="function">
    <text evidence="3 4">Antitoxin component of a type II toxin-antitoxin (TA) system (PubMed:25391136, PubMed:27672196). Neutralizes the effect of cognate toxin VapC1 (PubMed:25391136, PubMed:27672196) but not non-cognate toxin VapC2 (PubMed:27672196).</text>
</comment>
<comment type="subunit">
    <text evidence="4">Forms a complex with VapC1, and a weak complex with VapC2 (PubMed:27672196).</text>
</comment>
<comment type="induction">
    <text evidence="2">More highly expressed in early growth phase, expression decreases as cell density decreases. Part of the vapB1-vapC1 operon.</text>
</comment>
<comment type="similarity">
    <text evidence="6">Belongs to the VapB family.</text>
</comment>
<protein>
    <recommendedName>
        <fullName>Antitoxin VapB1</fullName>
    </recommendedName>
    <alternativeName>
        <fullName evidence="5">NTHi VapB1</fullName>
    </alternativeName>
</protein>